<gene>
    <name evidence="1" type="primary">glk</name>
    <name type="ordered locus">ECED1_2835</name>
</gene>
<name>GLK_ECO81</name>
<feature type="chain" id="PRO_1000146252" description="Glucokinase">
    <location>
        <begin position="1"/>
        <end position="321"/>
    </location>
</feature>
<feature type="binding site" evidence="1">
    <location>
        <begin position="8"/>
        <end position="13"/>
    </location>
    <ligand>
        <name>ATP</name>
        <dbReference type="ChEBI" id="CHEBI:30616"/>
    </ligand>
</feature>
<accession>B7MY46</accession>
<evidence type="ECO:0000255" key="1">
    <source>
        <dbReference type="HAMAP-Rule" id="MF_00524"/>
    </source>
</evidence>
<reference key="1">
    <citation type="journal article" date="2009" name="PLoS Genet.">
        <title>Organised genome dynamics in the Escherichia coli species results in highly diverse adaptive paths.</title>
        <authorList>
            <person name="Touchon M."/>
            <person name="Hoede C."/>
            <person name="Tenaillon O."/>
            <person name="Barbe V."/>
            <person name="Baeriswyl S."/>
            <person name="Bidet P."/>
            <person name="Bingen E."/>
            <person name="Bonacorsi S."/>
            <person name="Bouchier C."/>
            <person name="Bouvet O."/>
            <person name="Calteau A."/>
            <person name="Chiapello H."/>
            <person name="Clermont O."/>
            <person name="Cruveiller S."/>
            <person name="Danchin A."/>
            <person name="Diard M."/>
            <person name="Dossat C."/>
            <person name="Karoui M.E."/>
            <person name="Frapy E."/>
            <person name="Garry L."/>
            <person name="Ghigo J.M."/>
            <person name="Gilles A.M."/>
            <person name="Johnson J."/>
            <person name="Le Bouguenec C."/>
            <person name="Lescat M."/>
            <person name="Mangenot S."/>
            <person name="Martinez-Jehanne V."/>
            <person name="Matic I."/>
            <person name="Nassif X."/>
            <person name="Oztas S."/>
            <person name="Petit M.A."/>
            <person name="Pichon C."/>
            <person name="Rouy Z."/>
            <person name="Ruf C.S."/>
            <person name="Schneider D."/>
            <person name="Tourret J."/>
            <person name="Vacherie B."/>
            <person name="Vallenet D."/>
            <person name="Medigue C."/>
            <person name="Rocha E.P.C."/>
            <person name="Denamur E."/>
        </authorList>
    </citation>
    <scope>NUCLEOTIDE SEQUENCE [LARGE SCALE GENOMIC DNA]</scope>
    <source>
        <strain>ED1a</strain>
    </source>
</reference>
<keyword id="KW-0067">ATP-binding</keyword>
<keyword id="KW-0963">Cytoplasm</keyword>
<keyword id="KW-0324">Glycolysis</keyword>
<keyword id="KW-0418">Kinase</keyword>
<keyword id="KW-0547">Nucleotide-binding</keyword>
<keyword id="KW-0808">Transferase</keyword>
<organism>
    <name type="scientific">Escherichia coli O81 (strain ED1a)</name>
    <dbReference type="NCBI Taxonomy" id="585397"/>
    <lineage>
        <taxon>Bacteria</taxon>
        <taxon>Pseudomonadati</taxon>
        <taxon>Pseudomonadota</taxon>
        <taxon>Gammaproteobacteria</taxon>
        <taxon>Enterobacterales</taxon>
        <taxon>Enterobacteriaceae</taxon>
        <taxon>Escherichia</taxon>
    </lineage>
</organism>
<proteinExistence type="inferred from homology"/>
<protein>
    <recommendedName>
        <fullName evidence="1">Glucokinase</fullName>
        <ecNumber evidence="1">2.7.1.2</ecNumber>
    </recommendedName>
    <alternativeName>
        <fullName evidence="1">Glucose kinase</fullName>
    </alternativeName>
</protein>
<dbReference type="EC" id="2.7.1.2" evidence="1"/>
<dbReference type="EMBL" id="CU928162">
    <property type="protein sequence ID" value="CAR09012.2"/>
    <property type="molecule type" value="Genomic_DNA"/>
</dbReference>
<dbReference type="RefSeq" id="WP_000170355.1">
    <property type="nucleotide sequence ID" value="NC_011745.1"/>
</dbReference>
<dbReference type="SMR" id="B7MY46"/>
<dbReference type="KEGG" id="ecq:ECED1_2835"/>
<dbReference type="HOGENOM" id="CLU_042582_1_0_6"/>
<dbReference type="Proteomes" id="UP000000748">
    <property type="component" value="Chromosome"/>
</dbReference>
<dbReference type="GO" id="GO:0005829">
    <property type="term" value="C:cytosol"/>
    <property type="evidence" value="ECO:0007669"/>
    <property type="project" value="TreeGrafter"/>
</dbReference>
<dbReference type="GO" id="GO:0005524">
    <property type="term" value="F:ATP binding"/>
    <property type="evidence" value="ECO:0007669"/>
    <property type="project" value="UniProtKB-UniRule"/>
</dbReference>
<dbReference type="GO" id="GO:0005536">
    <property type="term" value="F:D-glucose binding"/>
    <property type="evidence" value="ECO:0007669"/>
    <property type="project" value="InterPro"/>
</dbReference>
<dbReference type="GO" id="GO:0004340">
    <property type="term" value="F:glucokinase activity"/>
    <property type="evidence" value="ECO:0007669"/>
    <property type="project" value="UniProtKB-UniRule"/>
</dbReference>
<dbReference type="GO" id="GO:0006096">
    <property type="term" value="P:glycolytic process"/>
    <property type="evidence" value="ECO:0007669"/>
    <property type="project" value="UniProtKB-UniRule"/>
</dbReference>
<dbReference type="CDD" id="cd24008">
    <property type="entry name" value="ASKHA_NBD_GLK"/>
    <property type="match status" value="1"/>
</dbReference>
<dbReference type="FunFam" id="3.30.420.40:FF:000045">
    <property type="entry name" value="Glucokinase"/>
    <property type="match status" value="1"/>
</dbReference>
<dbReference type="FunFam" id="3.40.367.20:FF:000002">
    <property type="entry name" value="Glucokinase"/>
    <property type="match status" value="1"/>
</dbReference>
<dbReference type="Gene3D" id="3.30.420.40">
    <property type="match status" value="1"/>
</dbReference>
<dbReference type="Gene3D" id="3.40.367.20">
    <property type="match status" value="1"/>
</dbReference>
<dbReference type="HAMAP" id="MF_00524">
    <property type="entry name" value="Glucokinase"/>
    <property type="match status" value="1"/>
</dbReference>
<dbReference type="InterPro" id="IPR043129">
    <property type="entry name" value="ATPase_NBD"/>
</dbReference>
<dbReference type="InterPro" id="IPR050201">
    <property type="entry name" value="Bacterial_glucokinase"/>
</dbReference>
<dbReference type="InterPro" id="IPR003836">
    <property type="entry name" value="Glucokinase"/>
</dbReference>
<dbReference type="NCBIfam" id="TIGR00749">
    <property type="entry name" value="glk"/>
    <property type="match status" value="1"/>
</dbReference>
<dbReference type="NCBIfam" id="NF001414">
    <property type="entry name" value="PRK00292.1-1"/>
    <property type="match status" value="1"/>
</dbReference>
<dbReference type="NCBIfam" id="NF001416">
    <property type="entry name" value="PRK00292.1-3"/>
    <property type="match status" value="1"/>
</dbReference>
<dbReference type="PANTHER" id="PTHR47690">
    <property type="entry name" value="GLUCOKINASE"/>
    <property type="match status" value="1"/>
</dbReference>
<dbReference type="PANTHER" id="PTHR47690:SF1">
    <property type="entry name" value="GLUCOKINASE"/>
    <property type="match status" value="1"/>
</dbReference>
<dbReference type="Pfam" id="PF02685">
    <property type="entry name" value="Glucokinase"/>
    <property type="match status" value="1"/>
</dbReference>
<dbReference type="SUPFAM" id="SSF53067">
    <property type="entry name" value="Actin-like ATPase domain"/>
    <property type="match status" value="1"/>
</dbReference>
<comment type="catalytic activity">
    <reaction evidence="1">
        <text>D-glucose + ATP = D-glucose 6-phosphate + ADP + H(+)</text>
        <dbReference type="Rhea" id="RHEA:17825"/>
        <dbReference type="ChEBI" id="CHEBI:4167"/>
        <dbReference type="ChEBI" id="CHEBI:15378"/>
        <dbReference type="ChEBI" id="CHEBI:30616"/>
        <dbReference type="ChEBI" id="CHEBI:61548"/>
        <dbReference type="ChEBI" id="CHEBI:456216"/>
        <dbReference type="EC" id="2.7.1.2"/>
    </reaction>
</comment>
<comment type="subcellular location">
    <subcellularLocation>
        <location evidence="1">Cytoplasm</location>
    </subcellularLocation>
</comment>
<comment type="similarity">
    <text evidence="1">Belongs to the bacterial glucokinase family.</text>
</comment>
<sequence>MTKYALVGDVGGTNARLALCDIASGEISQAKTYSGLDYPSLEAVIRVYLEEHKVEVKDGCIAIACPITGDWVAMTNHTWAFSIAEMKKNLGFSHLEIINDFTAVSMAIPMLKKEHLIQFGGAEPVEGKPIAVYGAGTGLGVAHLVHVDKRWVSLPGEGGHVDFAPNSEEEGIILEILRAEIGHVSAERVLSGPGLVNLYRAIVKADNRLPENLKPKDITERALADSCTDCRRALSLFCVIMGRFGGNLALNLGTFGGVFIAGGIVPRFLEFFKASGFRAAFEDKGRFKEYVHDIPVYLIVHDNPGLLGSGAHLRQTLGHIL</sequence>